<proteinExistence type="inferred from homology"/>
<dbReference type="EMBL" id="CP000282">
    <property type="protein sequence ID" value="ABD80468.1"/>
    <property type="molecule type" value="Genomic_DNA"/>
</dbReference>
<dbReference type="RefSeq" id="WP_011467688.1">
    <property type="nucleotide sequence ID" value="NC_007912.1"/>
</dbReference>
<dbReference type="SMR" id="Q21LG1"/>
<dbReference type="STRING" id="203122.Sde_1206"/>
<dbReference type="GeneID" id="98612884"/>
<dbReference type="KEGG" id="sde:Sde_1206"/>
<dbReference type="eggNOG" id="COG0335">
    <property type="taxonomic scope" value="Bacteria"/>
</dbReference>
<dbReference type="HOGENOM" id="CLU_103507_2_2_6"/>
<dbReference type="OrthoDB" id="9803541at2"/>
<dbReference type="Proteomes" id="UP000001947">
    <property type="component" value="Chromosome"/>
</dbReference>
<dbReference type="GO" id="GO:0022625">
    <property type="term" value="C:cytosolic large ribosomal subunit"/>
    <property type="evidence" value="ECO:0007669"/>
    <property type="project" value="TreeGrafter"/>
</dbReference>
<dbReference type="GO" id="GO:0003735">
    <property type="term" value="F:structural constituent of ribosome"/>
    <property type="evidence" value="ECO:0007669"/>
    <property type="project" value="InterPro"/>
</dbReference>
<dbReference type="GO" id="GO:0006412">
    <property type="term" value="P:translation"/>
    <property type="evidence" value="ECO:0007669"/>
    <property type="project" value="UniProtKB-UniRule"/>
</dbReference>
<dbReference type="FunFam" id="2.30.30.790:FF:000001">
    <property type="entry name" value="50S ribosomal protein L19"/>
    <property type="match status" value="1"/>
</dbReference>
<dbReference type="Gene3D" id="2.30.30.790">
    <property type="match status" value="1"/>
</dbReference>
<dbReference type="HAMAP" id="MF_00402">
    <property type="entry name" value="Ribosomal_bL19"/>
    <property type="match status" value="1"/>
</dbReference>
<dbReference type="InterPro" id="IPR001857">
    <property type="entry name" value="Ribosomal_bL19"/>
</dbReference>
<dbReference type="InterPro" id="IPR018257">
    <property type="entry name" value="Ribosomal_bL19_CS"/>
</dbReference>
<dbReference type="InterPro" id="IPR038657">
    <property type="entry name" value="Ribosomal_bL19_sf"/>
</dbReference>
<dbReference type="InterPro" id="IPR008991">
    <property type="entry name" value="Translation_prot_SH3-like_sf"/>
</dbReference>
<dbReference type="NCBIfam" id="TIGR01024">
    <property type="entry name" value="rplS_bact"/>
    <property type="match status" value="1"/>
</dbReference>
<dbReference type="PANTHER" id="PTHR15680:SF9">
    <property type="entry name" value="LARGE RIBOSOMAL SUBUNIT PROTEIN BL19M"/>
    <property type="match status" value="1"/>
</dbReference>
<dbReference type="PANTHER" id="PTHR15680">
    <property type="entry name" value="RIBOSOMAL PROTEIN L19"/>
    <property type="match status" value="1"/>
</dbReference>
<dbReference type="Pfam" id="PF01245">
    <property type="entry name" value="Ribosomal_L19"/>
    <property type="match status" value="1"/>
</dbReference>
<dbReference type="PIRSF" id="PIRSF002191">
    <property type="entry name" value="Ribosomal_L19"/>
    <property type="match status" value="1"/>
</dbReference>
<dbReference type="PRINTS" id="PR00061">
    <property type="entry name" value="RIBOSOMALL19"/>
</dbReference>
<dbReference type="SUPFAM" id="SSF50104">
    <property type="entry name" value="Translation proteins SH3-like domain"/>
    <property type="match status" value="1"/>
</dbReference>
<dbReference type="PROSITE" id="PS01015">
    <property type="entry name" value="RIBOSOMAL_L19"/>
    <property type="match status" value="1"/>
</dbReference>
<organism>
    <name type="scientific">Saccharophagus degradans (strain 2-40 / ATCC 43961 / DSM 17024)</name>
    <dbReference type="NCBI Taxonomy" id="203122"/>
    <lineage>
        <taxon>Bacteria</taxon>
        <taxon>Pseudomonadati</taxon>
        <taxon>Pseudomonadota</taxon>
        <taxon>Gammaproteobacteria</taxon>
        <taxon>Cellvibrionales</taxon>
        <taxon>Cellvibrionaceae</taxon>
        <taxon>Saccharophagus</taxon>
    </lineage>
</organism>
<keyword id="KW-1185">Reference proteome</keyword>
<keyword id="KW-0687">Ribonucleoprotein</keyword>
<keyword id="KW-0689">Ribosomal protein</keyword>
<evidence type="ECO:0000255" key="1">
    <source>
        <dbReference type="HAMAP-Rule" id="MF_00402"/>
    </source>
</evidence>
<evidence type="ECO:0000305" key="2"/>
<gene>
    <name evidence="1" type="primary">rplS</name>
    <name type="ordered locus">Sde_1206</name>
</gene>
<feature type="chain" id="PRO_0000252541" description="Large ribosomal subunit protein bL19">
    <location>
        <begin position="1"/>
        <end position="118"/>
    </location>
</feature>
<comment type="function">
    <text evidence="1">This protein is located at the 30S-50S ribosomal subunit interface and may play a role in the structure and function of the aminoacyl-tRNA binding site.</text>
</comment>
<comment type="similarity">
    <text evidence="1">Belongs to the bacterial ribosomal protein bL19 family.</text>
</comment>
<reference key="1">
    <citation type="journal article" date="2008" name="PLoS Genet.">
        <title>Complete genome sequence of the complex carbohydrate-degrading marine bacterium, Saccharophagus degradans strain 2-40 T.</title>
        <authorList>
            <person name="Weiner R.M."/>
            <person name="Taylor L.E. II"/>
            <person name="Henrissat B."/>
            <person name="Hauser L."/>
            <person name="Land M."/>
            <person name="Coutinho P.M."/>
            <person name="Rancurel C."/>
            <person name="Saunders E.H."/>
            <person name="Longmire A.G."/>
            <person name="Zhang H."/>
            <person name="Bayer E.A."/>
            <person name="Gilbert H.J."/>
            <person name="Larimer F."/>
            <person name="Zhulin I.B."/>
            <person name="Ekborg N.A."/>
            <person name="Lamed R."/>
            <person name="Richardson P.M."/>
            <person name="Borovok I."/>
            <person name="Hutcheson S."/>
        </authorList>
    </citation>
    <scope>NUCLEOTIDE SEQUENCE [LARGE SCALE GENOMIC DNA]</scope>
    <source>
        <strain>2-40 / ATCC 43961 / DSM 17024</strain>
    </source>
</reference>
<name>RL19_SACD2</name>
<sequence>MSSKNKIIQELEAEQLKQDVPEFSPGDTVVVQVKVKEGNRERLQAFEGVVIARRNRGLDSAFTVRKISHGIGVERTFQTHSKQVDSVAVKRRGDVRQAKLYYLRELTGRAARIKEKLG</sequence>
<protein>
    <recommendedName>
        <fullName evidence="1">Large ribosomal subunit protein bL19</fullName>
    </recommendedName>
    <alternativeName>
        <fullName evidence="2">50S ribosomal protein L19</fullName>
    </alternativeName>
</protein>
<accession>Q21LG1</accession>